<dbReference type="EMBL" id="BC103420">
    <property type="protein sequence ID" value="AAI03421.1"/>
    <property type="status" value="ALT_SEQ"/>
    <property type="molecule type" value="mRNA"/>
</dbReference>
<dbReference type="RefSeq" id="NP_001030422.2">
    <property type="nucleotide sequence ID" value="NM_001035345.2"/>
</dbReference>
<dbReference type="SMR" id="Q3SYS4"/>
<dbReference type="FunCoup" id="Q3SYS4">
    <property type="interactions" value="130"/>
</dbReference>
<dbReference type="STRING" id="9913.ENSBTAP00000024994"/>
<dbReference type="PaxDb" id="9913-ENSBTAP00000024994"/>
<dbReference type="GeneID" id="523187"/>
<dbReference type="KEGG" id="bta:523187"/>
<dbReference type="CTD" id="123872"/>
<dbReference type="eggNOG" id="ENOG502QQFE">
    <property type="taxonomic scope" value="Eukaryota"/>
</dbReference>
<dbReference type="InParanoid" id="Q3SYS4"/>
<dbReference type="OrthoDB" id="1904536at2759"/>
<dbReference type="Proteomes" id="UP000009136">
    <property type="component" value="Unplaced"/>
</dbReference>
<dbReference type="GO" id="GO:0005930">
    <property type="term" value="C:axoneme"/>
    <property type="evidence" value="ECO:0000250"/>
    <property type="project" value="UniProtKB"/>
</dbReference>
<dbReference type="GO" id="GO:0070840">
    <property type="term" value="F:dynein complex binding"/>
    <property type="evidence" value="ECO:0000250"/>
    <property type="project" value="UniProtKB"/>
</dbReference>
<dbReference type="GO" id="GO:0035082">
    <property type="term" value="P:axoneme assembly"/>
    <property type="evidence" value="ECO:0000318"/>
    <property type="project" value="GO_Central"/>
</dbReference>
<dbReference type="GO" id="GO:0060271">
    <property type="term" value="P:cilium assembly"/>
    <property type="evidence" value="ECO:0000250"/>
    <property type="project" value="UniProtKB"/>
</dbReference>
<dbReference type="FunFam" id="3.80.10.10:FF:000349">
    <property type="entry name" value="Dynein assembly factor 1, axonemal"/>
    <property type="match status" value="1"/>
</dbReference>
<dbReference type="FunFam" id="3.80.10.10:FF:000394">
    <property type="entry name" value="Dynein assembly factor 1, axonemal"/>
    <property type="match status" value="1"/>
</dbReference>
<dbReference type="Gene3D" id="3.80.10.10">
    <property type="entry name" value="Ribonuclease Inhibitor"/>
    <property type="match status" value="2"/>
</dbReference>
<dbReference type="InterPro" id="IPR050576">
    <property type="entry name" value="Cilia_flagella_integrity"/>
</dbReference>
<dbReference type="InterPro" id="IPR001611">
    <property type="entry name" value="Leu-rich_rpt"/>
</dbReference>
<dbReference type="InterPro" id="IPR032675">
    <property type="entry name" value="LRR_dom_sf"/>
</dbReference>
<dbReference type="PANTHER" id="PTHR45973:SF19">
    <property type="entry name" value="DYNEIN AXONEMAL ASSEMBLY FACTOR 1"/>
    <property type="match status" value="1"/>
</dbReference>
<dbReference type="PANTHER" id="PTHR45973">
    <property type="entry name" value="PROTEIN PHOSPHATASE 1 REGULATORY SUBUNIT SDS22-RELATED"/>
    <property type="match status" value="1"/>
</dbReference>
<dbReference type="Pfam" id="PF14580">
    <property type="entry name" value="LRR_9"/>
    <property type="match status" value="1"/>
</dbReference>
<dbReference type="SMART" id="SM00365">
    <property type="entry name" value="LRR_SD22"/>
    <property type="match status" value="3"/>
</dbReference>
<dbReference type="SUPFAM" id="SSF52075">
    <property type="entry name" value="Outer arm dynein light chain 1"/>
    <property type="match status" value="1"/>
</dbReference>
<dbReference type="PROSITE" id="PS51450">
    <property type="entry name" value="LRR"/>
    <property type="match status" value="6"/>
</dbReference>
<name>DAAF1_BOVIN</name>
<keyword id="KW-0966">Cell projection</keyword>
<keyword id="KW-0969">Cilium</keyword>
<keyword id="KW-0433">Leucine-rich repeat</keyword>
<keyword id="KW-0597">Phosphoprotein</keyword>
<keyword id="KW-1185">Reference proteome</keyword>
<keyword id="KW-0677">Repeat</keyword>
<gene>
    <name type="primary">DNAAF1</name>
    <name type="synonym">LRRC50</name>
</gene>
<evidence type="ECO:0000250" key="1"/>
<evidence type="ECO:0000250" key="2">
    <source>
        <dbReference type="UniProtKB" id="Q9D2H9"/>
    </source>
</evidence>
<evidence type="ECO:0000256" key="3">
    <source>
        <dbReference type="SAM" id="MobiDB-lite"/>
    </source>
</evidence>
<evidence type="ECO:0000305" key="4"/>
<comment type="function">
    <text evidence="1">Cilium-specific protein required for the stability of the ciliary architecture. Plays a role in cytoplasmic preassembly of dynein arms (By similarity). Involved in regulation of microtubule-based cilia and actin-based brush border microvilli (By similarity).</text>
</comment>
<comment type="subcellular location">
    <subcellularLocation>
        <location evidence="1">Cell projection</location>
        <location evidence="1">Cilium</location>
    </subcellularLocation>
</comment>
<comment type="similarity">
    <text evidence="4">Belongs to the DNAAF1 family.</text>
</comment>
<comment type="sequence caution" evidence="4">
    <conflict type="erroneous termination">
        <sequence resource="EMBL-CDS" id="AAI03421"/>
    </conflict>
    <text>Truncated C-terminus.</text>
</comment>
<protein>
    <recommendedName>
        <fullName>Dynein axonemal assembly factor 1</fullName>
    </recommendedName>
    <alternativeName>
        <fullName>Leucine-rich repeat-containing protein 50</fullName>
    </alternativeName>
</protein>
<reference key="1">
    <citation type="submission" date="2005-08" db="EMBL/GenBank/DDBJ databases">
        <authorList>
            <consortium name="NIH - Mammalian Gene Collection (MGC) project"/>
        </authorList>
    </citation>
    <scope>NUCLEOTIDE SEQUENCE [LARGE SCALE MRNA]</scope>
    <source>
        <strain>Hereford</strain>
        <tissue>Testis</tissue>
    </source>
</reference>
<accession>Q3SYS4</accession>
<organism>
    <name type="scientific">Bos taurus</name>
    <name type="common">Bovine</name>
    <dbReference type="NCBI Taxonomy" id="9913"/>
    <lineage>
        <taxon>Eukaryota</taxon>
        <taxon>Metazoa</taxon>
        <taxon>Chordata</taxon>
        <taxon>Craniata</taxon>
        <taxon>Vertebrata</taxon>
        <taxon>Euteleostomi</taxon>
        <taxon>Mammalia</taxon>
        <taxon>Eutheria</taxon>
        <taxon>Laurasiatheria</taxon>
        <taxon>Artiodactyla</taxon>
        <taxon>Ruminantia</taxon>
        <taxon>Pecora</taxon>
        <taxon>Bovidae</taxon>
        <taxon>Bovinae</taxon>
        <taxon>Bos</taxon>
    </lineage>
</organism>
<sequence>MHPEASEPVVDGVAEQECAQEPGVEESAGDHGNAGEGGRKEEMNDPKETCVGPLNTSCLSEQKQSGDSWSDGRLAHQRADKEDRGARMTKKFLQKLCKQHKLYITPALNDTLYLHYKGFDRIENLEEYTGLRCLWLECNGIQKIENLEAQTELRCLFLQVNLLHKIENLEPLQKLDALNISNNYIKTIENLSCLPVLNTLQMAHNHLETVEDIQHLRECARLCVLDLSHNKLSDPEILRVLESMPDLRVLNLMGNPVIKNIPNYRRILTVRLKHLTYLDDRPVFPKDRACAEAWARGGYAAEKEERQQREMRERKKITDSIEALAALRRQAEERKWQRASQEQGEEPTPAGAGDVDAEVEGEEEPQEKDTRQKIEQFVKESFEAKDELFPEKPEEPSLLEELPLDVGEPKGVLPSEVLPASPRAAWAELAPQTVATESASGTEPDGAENLEATRLETKEQLFIDDLPNLEDVNAGESLGDRDREQCFPKITAISSLSDASEPDMDDISLLALENTSSDTLSSIFAVPKDTSWRVETETPFTDILKVAPERDPETQRKASEVPRPLIQELGDDEEPSGPPPLPPVCEGEAVPAPCTEDSDGDLLPAPAPGNGPEKDEVQSEVEPEERLGSEAGENREDIEFGLD</sequence>
<proteinExistence type="evidence at transcript level"/>
<feature type="chain" id="PRO_0000363929" description="Dynein axonemal assembly factor 1">
    <location>
        <begin position="1"/>
        <end position="643"/>
    </location>
</feature>
<feature type="repeat" description="LRR 1">
    <location>
        <begin position="107"/>
        <end position="129"/>
    </location>
</feature>
<feature type="repeat" description="LRR 2">
    <location>
        <begin position="130"/>
        <end position="151"/>
    </location>
</feature>
<feature type="repeat" description="LRR 3">
    <location>
        <begin position="152"/>
        <end position="173"/>
    </location>
</feature>
<feature type="repeat" description="LRR 4">
    <location>
        <begin position="174"/>
        <end position="195"/>
    </location>
</feature>
<feature type="repeat" description="LRR 5">
    <location>
        <begin position="196"/>
        <end position="217"/>
    </location>
</feature>
<feature type="repeat" description="LRR 6">
    <location>
        <begin position="221"/>
        <end position="242"/>
    </location>
</feature>
<feature type="domain" description="LRRCT">
    <location>
        <begin position="256"/>
        <end position="294"/>
    </location>
</feature>
<feature type="region of interest" description="Disordered" evidence="3">
    <location>
        <begin position="1"/>
        <end position="85"/>
    </location>
</feature>
<feature type="region of interest" description="Disordered" evidence="3">
    <location>
        <begin position="332"/>
        <end position="405"/>
    </location>
</feature>
<feature type="region of interest" description="Disordered" evidence="3">
    <location>
        <begin position="537"/>
        <end position="643"/>
    </location>
</feature>
<feature type="compositionally biased region" description="Basic and acidic residues" evidence="3">
    <location>
        <begin position="37"/>
        <end position="48"/>
    </location>
</feature>
<feature type="compositionally biased region" description="Polar residues" evidence="3">
    <location>
        <begin position="54"/>
        <end position="68"/>
    </location>
</feature>
<feature type="compositionally biased region" description="Basic and acidic residues" evidence="3">
    <location>
        <begin position="73"/>
        <end position="85"/>
    </location>
</feature>
<feature type="compositionally biased region" description="Acidic residues" evidence="3">
    <location>
        <begin position="355"/>
        <end position="366"/>
    </location>
</feature>
<feature type="compositionally biased region" description="Basic and acidic residues" evidence="3">
    <location>
        <begin position="367"/>
        <end position="395"/>
    </location>
</feature>
<feature type="compositionally biased region" description="Basic and acidic residues" evidence="3">
    <location>
        <begin position="547"/>
        <end position="560"/>
    </location>
</feature>
<feature type="compositionally biased region" description="Basic and acidic residues" evidence="3">
    <location>
        <begin position="624"/>
        <end position="643"/>
    </location>
</feature>
<feature type="modified residue" description="Phosphoserine" evidence="2">
    <location>
        <position position="477"/>
    </location>
</feature>
<feature type="modified residue" description="Phosphoserine" evidence="2">
    <location>
        <position position="500"/>
    </location>
</feature>